<comment type="function">
    <text>Toxin which activates the particulate form of guanylate cyclase and increases cyclic GMP levels within the host intestinal epithelial cells.</text>
</comment>
<comment type="subcellular location">
    <subcellularLocation>
        <location>Secreted</location>
    </subcellularLocation>
</comment>
<comment type="similarity">
    <text evidence="3">Belongs to the heat-stable enterotoxin family.</text>
</comment>
<protein>
    <recommendedName>
        <fullName>Heat-stable enterotoxin A2</fullName>
        <shortName>STA2</shortName>
    </recommendedName>
</protein>
<dbReference type="EMBL" id="M18345">
    <property type="protein sequence ID" value="AAA23729.1"/>
    <property type="molecule type" value="Genomic_DNA"/>
</dbReference>
<dbReference type="PIR" id="JS0292">
    <property type="entry name" value="QHECIB"/>
</dbReference>
<dbReference type="RefSeq" id="WP_014654027.1">
    <property type="nucleotide sequence ID" value="NZ_UEMW01000095.1"/>
</dbReference>
<dbReference type="GO" id="GO:0005615">
    <property type="term" value="C:extracellular space"/>
    <property type="evidence" value="ECO:0007669"/>
    <property type="project" value="InterPro"/>
</dbReference>
<dbReference type="GO" id="GO:0090729">
    <property type="term" value="F:toxin activity"/>
    <property type="evidence" value="ECO:0007669"/>
    <property type="project" value="UniProtKB-KW"/>
</dbReference>
<dbReference type="InterPro" id="IPR019806">
    <property type="entry name" value="Heat-stable_enterotox_CS"/>
</dbReference>
<dbReference type="InterPro" id="IPR001489">
    <property type="entry name" value="Heat-stable_enterotox_STa"/>
</dbReference>
<dbReference type="Pfam" id="PF02048">
    <property type="entry name" value="Enterotoxin_ST"/>
    <property type="match status" value="1"/>
</dbReference>
<dbReference type="PROSITE" id="PS00273">
    <property type="entry name" value="ENTEROTOXIN_H_STABLE"/>
    <property type="match status" value="1"/>
</dbReference>
<evidence type="ECO:0000250" key="1"/>
<evidence type="ECO:0000255" key="2"/>
<evidence type="ECO:0000305" key="3"/>
<feature type="signal peptide" evidence="2">
    <location>
        <begin position="1"/>
        <end position="19"/>
    </location>
</feature>
<feature type="propeptide" id="PRO_0000035128" evidence="1">
    <location>
        <begin position="20"/>
        <end position="53"/>
    </location>
</feature>
<feature type="peptide" id="PRO_0000035129" description="Heat-stable enterotoxin A2">
    <location>
        <begin position="54"/>
        <end position="72"/>
    </location>
</feature>
<feature type="disulfide bond" evidence="1">
    <location>
        <begin position="59"/>
        <end position="64"/>
    </location>
</feature>
<feature type="disulfide bond" evidence="1">
    <location>
        <begin position="60"/>
        <end position="68"/>
    </location>
</feature>
<feature type="disulfide bond" evidence="1">
    <location>
        <begin position="63"/>
        <end position="71"/>
    </location>
</feature>
<proteinExistence type="inferred from homology"/>
<accession>Q47185</accession>
<sequence length="72" mass="7895">MKKSILFIFLSVLSFSPFAQDAKPAGSSKEKITLESKKCNIVKKNNESSPESMNSSNYCCELCCNPACTGCY</sequence>
<reference key="1">
    <citation type="journal article" date="1989" name="Infect. Immun.">
        <title>Rectification of two Escherichia coli heat-stable enterotoxin allele sequences and lack of biological effect of changing the carboxy-terminal tyrosine to histidine.</title>
        <authorList>
            <person name="Guzman-Verduzio L.M."/>
            <person name="Kupersztoch Y.M."/>
        </authorList>
    </citation>
    <scope>NUCLEOTIDE SEQUENCE [GENOMIC DNA]</scope>
</reference>
<name>HST2_ECOLX</name>
<keyword id="KW-1015">Disulfide bond</keyword>
<keyword id="KW-0260">Enterotoxin</keyword>
<keyword id="KW-0964">Secreted</keyword>
<keyword id="KW-0732">Signal</keyword>
<keyword id="KW-0800">Toxin</keyword>
<keyword id="KW-0843">Virulence</keyword>
<organism>
    <name type="scientific">Escherichia coli</name>
    <dbReference type="NCBI Taxonomy" id="562"/>
    <lineage>
        <taxon>Bacteria</taxon>
        <taxon>Pseudomonadati</taxon>
        <taxon>Pseudomonadota</taxon>
        <taxon>Gammaproteobacteria</taxon>
        <taxon>Enterobacterales</taxon>
        <taxon>Enterobacteriaceae</taxon>
        <taxon>Escherichia</taxon>
    </lineage>
</organism>
<gene>
    <name type="primary">sta2</name>
</gene>